<name>CRED_ASPFN</name>
<keyword id="KW-0833">Ubl conjugation pathway</keyword>
<evidence type="ECO:0000250" key="1"/>
<evidence type="ECO:0000256" key="2">
    <source>
        <dbReference type="SAM" id="MobiDB-lite"/>
    </source>
</evidence>
<evidence type="ECO:0000305" key="3"/>
<organism>
    <name type="scientific">Aspergillus flavus (strain ATCC 200026 / FGSC A1120 / IAM 13836 / NRRL 3357 / JCM 12722 / SRRC 167)</name>
    <dbReference type="NCBI Taxonomy" id="332952"/>
    <lineage>
        <taxon>Eukaryota</taxon>
        <taxon>Fungi</taxon>
        <taxon>Dikarya</taxon>
        <taxon>Ascomycota</taxon>
        <taxon>Pezizomycotina</taxon>
        <taxon>Eurotiomycetes</taxon>
        <taxon>Eurotiomycetidae</taxon>
        <taxon>Eurotiales</taxon>
        <taxon>Aspergillaceae</taxon>
        <taxon>Aspergillus</taxon>
        <taxon>Aspergillus subgen. Circumdati</taxon>
    </lineage>
</organism>
<protein>
    <recommendedName>
        <fullName>Probable HECT-type ubiquitin ligase-interacting protein creD</fullName>
    </recommendedName>
    <alternativeName>
        <fullName>Carbon catabolite repressor D</fullName>
    </alternativeName>
</protein>
<proteinExistence type="inferred from homology"/>
<gene>
    <name type="primary">creD</name>
    <name type="ORF">AFLA_036630</name>
</gene>
<accession>B8N4G0</accession>
<sequence length="603" mass="67103">MALSFFSGGGSASHAKYFDIRLDEDYIVFRGGEQEAASAHLSGKLLLCLSEPLSIKHIRLHLTGISRVCWHLPSSSAGGGRKSWRERVIYEKTWRFRDPGKGKTEILPAGNYEYPFNLVLEGNMPESIEGLSDTYITYRFKAEIGRKYAKDIIVRKPLRIIRTLEPSALELAHAMSVENIWPNKIEYSISTPTKAVIFGTSIRVDFKLIPLLKGLTIGQIVSQLIESHDLTLNPEDPDSIRNTYKNTRTILNDEFELDHDNALEIIDEAAEGYQFSRYLDLPKTLTRCLQDTDTKGIKVRHKLKFRVQLMNPDGHISELRATLPVSIFISPNLAIDENNNLVDQTPQSAQRAINDIAQQAPPLYGEHQFDQLYSELDPNGYRTPGPGSGPGTPFGTLSRNLSAENLASMNALTNTDISASALHSRLSNLSNLNITRPHQPSPTDHESQNDSEHRRLGVPADYFGPSSGSNSHSPSSPVLSRRPSDEVDHEHVPSGMATPFHPQYAEVETLSRVPSYSTAVRTTVRPHDSDLPDYDAVVAEDIPVPPPLQSPQQAHIRNAGRGSSQLFSSLDILHHRPGLGHSHSSSHDDEDRRLRLVQARARV</sequence>
<dbReference type="EMBL" id="EQ963473">
    <property type="protein sequence ID" value="EED56391.1"/>
    <property type="molecule type" value="Genomic_DNA"/>
</dbReference>
<dbReference type="RefSeq" id="XP_002375173.1">
    <property type="nucleotide sequence ID" value="XM_002375132.1"/>
</dbReference>
<dbReference type="SMR" id="B8N4G0"/>
<dbReference type="STRING" id="332952.B8N4G0"/>
<dbReference type="EnsemblFungi" id="EED56391">
    <property type="protein sequence ID" value="EED56391"/>
    <property type="gene ID" value="AFLA_036630"/>
</dbReference>
<dbReference type="VEuPathDB" id="FungiDB:AFLA_001551"/>
<dbReference type="eggNOG" id="KOG3780">
    <property type="taxonomic scope" value="Eukaryota"/>
</dbReference>
<dbReference type="HOGENOM" id="CLU_018982_2_0_1"/>
<dbReference type="OMA" id="GMATPFH"/>
<dbReference type="GO" id="GO:0005829">
    <property type="term" value="C:cytosol"/>
    <property type="evidence" value="ECO:0007669"/>
    <property type="project" value="TreeGrafter"/>
</dbReference>
<dbReference type="GO" id="GO:0005886">
    <property type="term" value="C:plasma membrane"/>
    <property type="evidence" value="ECO:0007669"/>
    <property type="project" value="TreeGrafter"/>
</dbReference>
<dbReference type="GO" id="GO:0030674">
    <property type="term" value="F:protein-macromolecule adaptor activity"/>
    <property type="evidence" value="ECO:0007669"/>
    <property type="project" value="TreeGrafter"/>
</dbReference>
<dbReference type="GO" id="GO:0031625">
    <property type="term" value="F:ubiquitin protein ligase binding"/>
    <property type="evidence" value="ECO:0007669"/>
    <property type="project" value="TreeGrafter"/>
</dbReference>
<dbReference type="GO" id="GO:0031396">
    <property type="term" value="P:regulation of protein ubiquitination"/>
    <property type="evidence" value="ECO:0000250"/>
    <property type="project" value="UniProtKB"/>
</dbReference>
<dbReference type="GO" id="GO:0070086">
    <property type="term" value="P:ubiquitin-dependent endocytosis"/>
    <property type="evidence" value="ECO:0007669"/>
    <property type="project" value="TreeGrafter"/>
</dbReference>
<dbReference type="FunFam" id="2.60.40.640:FF:000018">
    <property type="entry name" value="HECT-type ubiquitin ligase-interacting protein creD"/>
    <property type="match status" value="1"/>
</dbReference>
<dbReference type="Gene3D" id="2.60.40.640">
    <property type="match status" value="1"/>
</dbReference>
<dbReference type="InterPro" id="IPR014752">
    <property type="entry name" value="Arrestin-like_C"/>
</dbReference>
<dbReference type="InterPro" id="IPR011021">
    <property type="entry name" value="Arrestin-like_N"/>
</dbReference>
<dbReference type="InterPro" id="IPR011022">
    <property type="entry name" value="Arrestin_C-like"/>
</dbReference>
<dbReference type="InterPro" id="IPR050357">
    <property type="entry name" value="Arrestin_domain-protein"/>
</dbReference>
<dbReference type="InterPro" id="IPR014756">
    <property type="entry name" value="Ig_E-set"/>
</dbReference>
<dbReference type="PANTHER" id="PTHR11188">
    <property type="entry name" value="ARRESTIN DOMAIN CONTAINING PROTEIN"/>
    <property type="match status" value="1"/>
</dbReference>
<dbReference type="PANTHER" id="PTHR11188:SF17">
    <property type="entry name" value="FI21816P1"/>
    <property type="match status" value="1"/>
</dbReference>
<dbReference type="Pfam" id="PF02752">
    <property type="entry name" value="Arrestin_C"/>
    <property type="match status" value="1"/>
</dbReference>
<dbReference type="Pfam" id="PF00339">
    <property type="entry name" value="Arrestin_N"/>
    <property type="match status" value="1"/>
</dbReference>
<dbReference type="SMART" id="SM01017">
    <property type="entry name" value="Arrestin_C"/>
    <property type="match status" value="1"/>
</dbReference>
<dbReference type="SUPFAM" id="SSF81296">
    <property type="entry name" value="E set domains"/>
    <property type="match status" value="1"/>
</dbReference>
<comment type="function">
    <text evidence="1">Component of the regulatory network controlling carbon source utilization through ubiquitination and deubiquitination involving creA, creB, creC, creD and acrB. May be involved in signaling by recognizing appropriately phosphorylated substrates via its arrestin domains and then recruit a HECT-type ubiquitin ligase such as hulA, leading to ubiquitination of the substrate, providing a link between ubiquitination and phosphorylation in protein regulation and stability (By similarity).</text>
</comment>
<comment type="subunit">
    <text evidence="1">Interacts with hulA.</text>
</comment>
<comment type="similarity">
    <text evidence="3">Belongs to the arrestin family.</text>
</comment>
<feature type="chain" id="PRO_0000395697" description="Probable HECT-type ubiquitin ligase-interacting protein creD">
    <location>
        <begin position="1"/>
        <end position="603"/>
    </location>
</feature>
<feature type="region of interest" description="Disordered" evidence="2">
    <location>
        <begin position="375"/>
        <end position="398"/>
    </location>
</feature>
<feature type="region of interest" description="Disordered" evidence="2">
    <location>
        <begin position="432"/>
        <end position="499"/>
    </location>
</feature>
<feature type="compositionally biased region" description="Basic and acidic residues" evidence="2">
    <location>
        <begin position="443"/>
        <end position="455"/>
    </location>
</feature>
<feature type="compositionally biased region" description="Low complexity" evidence="2">
    <location>
        <begin position="465"/>
        <end position="481"/>
    </location>
</feature>
<feature type="compositionally biased region" description="Basic and acidic residues" evidence="2">
    <location>
        <begin position="482"/>
        <end position="492"/>
    </location>
</feature>
<reference key="1">
    <citation type="journal article" date="2015" name="Genome Announc.">
        <title>Genome sequence of Aspergillus flavus NRRL 3357, a strain that causes aflatoxin contamination of food and feed.</title>
        <authorList>
            <person name="Nierman W.C."/>
            <person name="Yu J."/>
            <person name="Fedorova-Abrams N.D."/>
            <person name="Losada L."/>
            <person name="Cleveland T.E."/>
            <person name="Bhatnagar D."/>
            <person name="Bennett J.W."/>
            <person name="Dean R."/>
            <person name="Payne G.A."/>
        </authorList>
    </citation>
    <scope>NUCLEOTIDE SEQUENCE [LARGE SCALE GENOMIC DNA]</scope>
    <source>
        <strain>ATCC 200026 / FGSC A1120 / IAM 13836 / NRRL 3357 / JCM 12722 / SRRC 167</strain>
    </source>
</reference>